<accession>Q39571</accession>
<protein>
    <recommendedName>
        <fullName>GTP-binding protein YPTC1</fullName>
    </recommendedName>
</protein>
<gene>
    <name type="primary">YPTC1</name>
</gene>
<organism>
    <name type="scientific">Chlamydomonas reinhardtii</name>
    <name type="common">Chlamydomonas smithii</name>
    <dbReference type="NCBI Taxonomy" id="3055"/>
    <lineage>
        <taxon>Eukaryota</taxon>
        <taxon>Viridiplantae</taxon>
        <taxon>Chlorophyta</taxon>
        <taxon>core chlorophytes</taxon>
        <taxon>Chlorophyceae</taxon>
        <taxon>CS clade</taxon>
        <taxon>Chlamydomonadales</taxon>
        <taxon>Chlamydomonadaceae</taxon>
        <taxon>Chlamydomonas</taxon>
    </lineage>
</organism>
<sequence length="203" mass="22599">MNPEYDYLFKLLLIGDSGVGKSCLLLRFADDTYTESYISTIGVDFKIRTVELDGKVIKLQIWDTAGQERFRTITSSYYRGAHGIIVVYDVTDQESFNNVKQWLNEIDRYASENVNKLLVGNKSDLTSKKVVEYSVAKAFADEIGIPFLETSAKNATNVEQAFMTMAAEIKNRMASQPIPTKAGGPVVRPQEGKPINSKSSSCC</sequence>
<keyword id="KW-1003">Cell membrane</keyword>
<keyword id="KW-0342">GTP-binding</keyword>
<keyword id="KW-0449">Lipoprotein</keyword>
<keyword id="KW-0472">Membrane</keyword>
<keyword id="KW-0547">Nucleotide-binding</keyword>
<keyword id="KW-0636">Prenylation</keyword>
<keyword id="KW-0653">Protein transport</keyword>
<keyword id="KW-0813">Transport</keyword>
<evidence type="ECO:0000250" key="1"/>
<evidence type="ECO:0000250" key="2">
    <source>
        <dbReference type="UniProtKB" id="P01123"/>
    </source>
</evidence>
<evidence type="ECO:0000250" key="3">
    <source>
        <dbReference type="UniProtKB" id="P62820"/>
    </source>
</evidence>
<evidence type="ECO:0000256" key="4">
    <source>
        <dbReference type="SAM" id="MobiDB-lite"/>
    </source>
</evidence>
<evidence type="ECO:0000305" key="5"/>
<reference key="1">
    <citation type="journal article" date="1995" name="Gene">
        <title>Analysis of a family of ypt genes and their products from Chlamydomonas reinhardtii.</title>
        <authorList>
            <person name="Dietmaier W."/>
            <person name="Fabry S."/>
            <person name="Huber H."/>
            <person name="Schmitt R."/>
        </authorList>
    </citation>
    <scope>NUCLEOTIDE SEQUENCE [GENOMIC DNA]</scope>
    <source>
        <strain>cw15</strain>
    </source>
</reference>
<comment type="function">
    <text evidence="1">Protein transport. Probably involved in vesicular traffic (By similarity).</text>
</comment>
<comment type="subcellular location">
    <subcellularLocation>
        <location evidence="5">Cell membrane</location>
        <topology evidence="5">Lipid-anchor</topology>
        <orientation evidence="5">Cytoplasmic side</orientation>
    </subcellularLocation>
</comment>
<comment type="similarity">
    <text evidence="5">Belongs to the small GTPase superfamily. Rab family.</text>
</comment>
<name>YPTC1_CHLRE</name>
<feature type="chain" id="PRO_0000121293" description="GTP-binding protein YPTC1">
    <location>
        <begin position="1"/>
        <end position="203"/>
    </location>
</feature>
<feature type="region of interest" description="Disordered" evidence="4">
    <location>
        <begin position="174"/>
        <end position="203"/>
    </location>
</feature>
<feature type="short sequence motif" description="Effector region" evidence="5">
    <location>
        <begin position="37"/>
        <end position="45"/>
    </location>
</feature>
<feature type="binding site" evidence="3">
    <location>
        <begin position="15"/>
        <end position="23"/>
    </location>
    <ligand>
        <name>GTP</name>
        <dbReference type="ChEBI" id="CHEBI:37565"/>
    </ligand>
</feature>
<feature type="binding site" evidence="3">
    <location>
        <begin position="33"/>
        <end position="40"/>
    </location>
    <ligand>
        <name>GTP</name>
        <dbReference type="ChEBI" id="CHEBI:37565"/>
    </ligand>
</feature>
<feature type="binding site" evidence="3">
    <location>
        <begin position="63"/>
        <end position="67"/>
    </location>
    <ligand>
        <name>GTP</name>
        <dbReference type="ChEBI" id="CHEBI:37565"/>
    </ligand>
</feature>
<feature type="binding site" evidence="3">
    <location>
        <begin position="121"/>
        <end position="124"/>
    </location>
    <ligand>
        <name>GTP</name>
        <dbReference type="ChEBI" id="CHEBI:37565"/>
    </ligand>
</feature>
<feature type="binding site" evidence="3">
    <location>
        <begin position="151"/>
        <end position="153"/>
    </location>
    <ligand>
        <name>GTP</name>
        <dbReference type="ChEBI" id="CHEBI:37565"/>
    </ligand>
</feature>
<feature type="lipid moiety-binding region" description="S-geranylgeranyl cysteine" evidence="2">
    <location>
        <position position="202"/>
    </location>
</feature>
<feature type="lipid moiety-binding region" description="S-geranylgeranyl cysteine" evidence="2">
    <location>
        <position position="203"/>
    </location>
</feature>
<dbReference type="EMBL" id="U13168">
    <property type="protein sequence ID" value="AAA82727.1"/>
    <property type="molecule type" value="Genomic_DNA"/>
</dbReference>
<dbReference type="PIR" id="JC4105">
    <property type="entry name" value="JC4105"/>
</dbReference>
<dbReference type="RefSeq" id="XP_001703135.1">
    <property type="nucleotide sequence ID" value="XM_001703083.1"/>
</dbReference>
<dbReference type="SMR" id="Q39571"/>
<dbReference type="PaxDb" id="3055-EDO96600"/>
<dbReference type="ProMEX" id="Q39571"/>
<dbReference type="EnsemblPlants" id="PNW75798">
    <property type="protein sequence ID" value="PNW75798"/>
    <property type="gene ID" value="CHLRE_12g560150v5"/>
</dbReference>
<dbReference type="Gramene" id="PNW75798">
    <property type="protein sequence ID" value="PNW75798"/>
    <property type="gene ID" value="CHLRE_12g560150v5"/>
</dbReference>
<dbReference type="KEGG" id="cre:CHLRE_12g560150v5"/>
<dbReference type="eggNOG" id="KOG0084">
    <property type="taxonomic scope" value="Eukaryota"/>
</dbReference>
<dbReference type="HOGENOM" id="CLU_041217_23_1_1"/>
<dbReference type="OMA" id="PDYHYLF"/>
<dbReference type="OrthoDB" id="9989112at2759"/>
<dbReference type="GO" id="GO:0005886">
    <property type="term" value="C:plasma membrane"/>
    <property type="evidence" value="ECO:0007669"/>
    <property type="project" value="UniProtKB-SubCell"/>
</dbReference>
<dbReference type="GO" id="GO:0005525">
    <property type="term" value="F:GTP binding"/>
    <property type="evidence" value="ECO:0007669"/>
    <property type="project" value="UniProtKB-KW"/>
</dbReference>
<dbReference type="GO" id="GO:0003924">
    <property type="term" value="F:GTPase activity"/>
    <property type="evidence" value="ECO:0007669"/>
    <property type="project" value="InterPro"/>
</dbReference>
<dbReference type="GO" id="GO:0015031">
    <property type="term" value="P:protein transport"/>
    <property type="evidence" value="ECO:0007669"/>
    <property type="project" value="UniProtKB-KW"/>
</dbReference>
<dbReference type="CDD" id="cd01869">
    <property type="entry name" value="Rab1_Ypt1"/>
    <property type="match status" value="1"/>
</dbReference>
<dbReference type="FunFam" id="3.40.50.300:FF:000359">
    <property type="entry name" value="Small GTP-binding protein"/>
    <property type="match status" value="1"/>
</dbReference>
<dbReference type="Gene3D" id="3.40.50.300">
    <property type="entry name" value="P-loop containing nucleotide triphosphate hydrolases"/>
    <property type="match status" value="1"/>
</dbReference>
<dbReference type="InterPro" id="IPR027417">
    <property type="entry name" value="P-loop_NTPase"/>
</dbReference>
<dbReference type="InterPro" id="IPR050227">
    <property type="entry name" value="Rab"/>
</dbReference>
<dbReference type="InterPro" id="IPR005225">
    <property type="entry name" value="Small_GTP-bd"/>
</dbReference>
<dbReference type="InterPro" id="IPR001806">
    <property type="entry name" value="Small_GTPase"/>
</dbReference>
<dbReference type="NCBIfam" id="TIGR00231">
    <property type="entry name" value="small_GTP"/>
    <property type="match status" value="1"/>
</dbReference>
<dbReference type="PANTHER" id="PTHR47977">
    <property type="entry name" value="RAS-RELATED PROTEIN RAB"/>
    <property type="match status" value="1"/>
</dbReference>
<dbReference type="Pfam" id="PF00071">
    <property type="entry name" value="Ras"/>
    <property type="match status" value="1"/>
</dbReference>
<dbReference type="PRINTS" id="PR00449">
    <property type="entry name" value="RASTRNSFRMNG"/>
</dbReference>
<dbReference type="SMART" id="SM00175">
    <property type="entry name" value="RAB"/>
    <property type="match status" value="1"/>
</dbReference>
<dbReference type="SMART" id="SM00176">
    <property type="entry name" value="RAN"/>
    <property type="match status" value="1"/>
</dbReference>
<dbReference type="SMART" id="SM00173">
    <property type="entry name" value="RAS"/>
    <property type="match status" value="1"/>
</dbReference>
<dbReference type="SMART" id="SM00174">
    <property type="entry name" value="RHO"/>
    <property type="match status" value="1"/>
</dbReference>
<dbReference type="SUPFAM" id="SSF52540">
    <property type="entry name" value="P-loop containing nucleoside triphosphate hydrolases"/>
    <property type="match status" value="1"/>
</dbReference>
<dbReference type="PROSITE" id="PS51419">
    <property type="entry name" value="RAB"/>
    <property type="match status" value="1"/>
</dbReference>
<proteinExistence type="inferred from homology"/>